<sequence>MPKSEIRKLLQEIKKQVDNPGNSSTTEIKKMASEAGIDEKTAEEIYHLLTEFYQAVEEHGGIEKYMHSNISWLKIELELLSACYQIAILEDMKVLDISEMLSLNDLRIFPKTPSQLQNTYYKLKKELIQVEDIPKNKPGRKRKTQKNTKKEKTNIFGKVVPAEFKAPTSIKEQISYDKSREKNLVDLLSGVKSNVQLLSENQGEENNVYDLLKSIYSLSSLAVQKEELDKKYQDLQTKCQELEQENSYLKQQNETMTDSFHTLVLQVADFAYASDLDQIQALPLFSQQLVVTLNQLGVFKENYKQM</sequence>
<reference key="1">
    <citation type="journal article" date="2004" name="Nucleic Acids Res.">
        <title>Whole genome comparisons of serotype 4b and 1/2a strains of the food-borne pathogen Listeria monocytogenes reveal new insights into the core genome components of this species.</title>
        <authorList>
            <person name="Nelson K.E."/>
            <person name="Fouts D.E."/>
            <person name="Mongodin E.F."/>
            <person name="Ravel J."/>
            <person name="DeBoy R.T."/>
            <person name="Kolonay J.F."/>
            <person name="Rasko D.A."/>
            <person name="Angiuoli S.V."/>
            <person name="Gill S.R."/>
            <person name="Paulsen I.T."/>
            <person name="Peterson J.D."/>
            <person name="White O."/>
            <person name="Nelson W.C."/>
            <person name="Nierman W.C."/>
            <person name="Beanan M.J."/>
            <person name="Brinkac L.M."/>
            <person name="Daugherty S.C."/>
            <person name="Dodson R.J."/>
            <person name="Durkin A.S."/>
            <person name="Madupu R."/>
            <person name="Haft D.H."/>
            <person name="Selengut J."/>
            <person name="Van Aken S.E."/>
            <person name="Khouri H.M."/>
            <person name="Fedorova N."/>
            <person name="Forberger H.A."/>
            <person name="Tran B."/>
            <person name="Kathariou S."/>
            <person name="Wonderling L.D."/>
            <person name="Uhlich G.A."/>
            <person name="Bayles D.O."/>
            <person name="Luchansky J.B."/>
            <person name="Fraser C.M."/>
        </authorList>
    </citation>
    <scope>NUCLEOTIDE SEQUENCE [LARGE SCALE GENOMIC DNA]</scope>
    <source>
        <strain>F2365</strain>
    </source>
</reference>
<protein>
    <recommendedName>
        <fullName>Motility gene repressor MogR</fullName>
    </recommendedName>
</protein>
<dbReference type="EMBL" id="AE017262">
    <property type="protein sequence ID" value="AAT03491.1"/>
    <property type="molecule type" value="Genomic_DNA"/>
</dbReference>
<dbReference type="RefSeq" id="WP_003724414.1">
    <property type="nucleotide sequence ID" value="NC_002973.6"/>
</dbReference>
<dbReference type="SMR" id="Q722M0"/>
<dbReference type="KEGG" id="lmf:LMOf2365_0710"/>
<dbReference type="HOGENOM" id="CLU_080650_0_0_9"/>
<dbReference type="GO" id="GO:0005737">
    <property type="term" value="C:cytoplasm"/>
    <property type="evidence" value="ECO:0007669"/>
    <property type="project" value="UniProtKB-SubCell"/>
</dbReference>
<dbReference type="GO" id="GO:0003677">
    <property type="term" value="F:DNA binding"/>
    <property type="evidence" value="ECO:0007669"/>
    <property type="project" value="UniProtKB-KW"/>
</dbReference>
<dbReference type="FunFam" id="1.20.120.1030:FF:000001">
    <property type="entry name" value="Motility gene repressor MogR"/>
    <property type="match status" value="1"/>
</dbReference>
<dbReference type="Gene3D" id="1.20.120.1030">
    <property type="entry name" value="Motility repressor MogR, DNA-binding domain"/>
    <property type="match status" value="1"/>
</dbReference>
<dbReference type="InterPro" id="IPR021009">
    <property type="entry name" value="MogR_DNA-bd"/>
</dbReference>
<dbReference type="InterPro" id="IPR038245">
    <property type="entry name" value="MogR_DNA-bd_sf"/>
</dbReference>
<dbReference type="Pfam" id="PF12181">
    <property type="entry name" value="MogR_DNAbind"/>
    <property type="match status" value="1"/>
</dbReference>
<keyword id="KW-0963">Cytoplasm</keyword>
<keyword id="KW-0238">DNA-binding</keyword>
<keyword id="KW-0678">Repressor</keyword>
<keyword id="KW-0804">Transcription</keyword>
<keyword id="KW-0805">Transcription regulation</keyword>
<keyword id="KW-0843">Virulence</keyword>
<proteinExistence type="inferred from homology"/>
<comment type="function">
    <text evidence="1">Transcriptional repressor of flagellar motility genes, such as flaA, during extracellular growth at 37 degrees Celsius and during intracellular infection. Binds directly to gene promoter region and probably prevents RNA polymerase binding. At low temperatures, MogR repression activity is modulated by the DegU response regulator in an unknown mechanism. Required for full virulence (By similarity).</text>
</comment>
<comment type="subcellular location">
    <subcellularLocation>
        <location evidence="1">Cytoplasm</location>
    </subcellularLocation>
</comment>
<organism>
    <name type="scientific">Listeria monocytogenes serotype 4b (strain F2365)</name>
    <dbReference type="NCBI Taxonomy" id="265669"/>
    <lineage>
        <taxon>Bacteria</taxon>
        <taxon>Bacillati</taxon>
        <taxon>Bacillota</taxon>
        <taxon>Bacilli</taxon>
        <taxon>Bacillales</taxon>
        <taxon>Listeriaceae</taxon>
        <taxon>Listeria</taxon>
    </lineage>
</organism>
<name>MOGR_LISMF</name>
<accession>Q722M0</accession>
<gene>
    <name type="primary">mogR</name>
    <name type="ordered locus">LMOf2365_0710</name>
</gene>
<feature type="chain" id="PRO_0000247905" description="Motility gene repressor MogR">
    <location>
        <begin position="1"/>
        <end position="306"/>
    </location>
</feature>
<evidence type="ECO:0000250" key="1"/>